<name>VKT4_CYRSC</name>
<keyword id="KW-1015">Disulfide bond</keyword>
<keyword id="KW-0646">Protease inhibitor</keyword>
<keyword id="KW-0964">Secreted</keyword>
<keyword id="KW-0722">Serine protease inhibitor</keyword>
<keyword id="KW-0732">Signal</keyword>
<comment type="function">
    <text evidence="4">Toxin with unknown function.</text>
</comment>
<comment type="subcellular location">
    <subcellularLocation>
        <location evidence="8">Secreted</location>
    </subcellularLocation>
</comment>
<comment type="tissue specificity">
    <text evidence="8">Expressed by the venom gland.</text>
</comment>
<comment type="miscellaneous">
    <text evidence="4">Negative results: the recombinant toxin shows weak inhibitory activity against Kv1.1/KCNA1 (59.2% inhibition at 10 uM). It does not show activity against Kv1.2/KCNA2, Kv1.3/KCNA3, Kv2.1/KCNB1 and Kv4.3/KCND3 channels, as well as on calcium (Cav) and sodium channels (Nav). It also does not show detectable activity against trypsin, kallikrein, chymotrypsin, and thrombin.</text>
</comment>
<comment type="similarity">
    <text evidence="7">Belongs to the venom Kunitz-type family. 02 (native) subfamily.</text>
</comment>
<proteinExistence type="inferred from homology"/>
<evidence type="ECO:0000250" key="1"/>
<evidence type="ECO:0000255" key="2"/>
<evidence type="ECO:0000255" key="3">
    <source>
        <dbReference type="PROSITE-ProRule" id="PRU00031"/>
    </source>
</evidence>
<evidence type="ECO:0000269" key="4">
    <source>
    </source>
</evidence>
<evidence type="ECO:0000303" key="5">
    <source>
    </source>
</evidence>
<evidence type="ECO:0000303" key="6">
    <source>
    </source>
</evidence>
<evidence type="ECO:0000305" key="7"/>
<evidence type="ECO:0000305" key="8">
    <source>
    </source>
</evidence>
<evidence type="ECO:0000312" key="9">
    <source>
        <dbReference type="EMBL" id="AHY30306.1"/>
    </source>
</evidence>
<accession>P0DJ76</accession>
<accession>A0A023WBH6</accession>
<reference key="1">
    <citation type="journal article" date="2008" name="PLoS ONE">
        <title>Discovery of a distinct superfamily of Kunitz-type toxin (KTT) from tarantulas.</title>
        <authorList>
            <person name="Yuan C.-H."/>
            <person name="He Q.-Y."/>
            <person name="Peng K."/>
            <person name="Diao J.-B."/>
            <person name="Jiang L.-P."/>
            <person name="Tang X."/>
            <person name="Liang S.-P."/>
        </authorList>
    </citation>
    <scope>NUCLEOTIDE SEQUENCE [MRNA]</scope>
    <source>
        <tissue>Venom gland</tissue>
    </source>
</reference>
<reference evidence="9" key="2">
    <citation type="journal article" date="2014" name="Peptides">
        <title>Molecular cloning, bioinformatics analysis and functional characterization of HWTX-XI toxin superfamily from the spider Ornithoctonus huwena.</title>
        <authorList>
            <person name="Jiang L."/>
            <person name="Deng M."/>
            <person name="Duan Z."/>
            <person name="Tang X."/>
            <person name="Liang S."/>
        </authorList>
    </citation>
    <scope>NUCLEOTIDE SEQUENCE [GENOMIC DNA]</scope>
    <scope>FUNCTION</scope>
    <scope>RECOMBINANT EXPRESSION</scope>
</reference>
<dbReference type="EMBL" id="KF160295">
    <property type="protein sequence ID" value="AHY30306.1"/>
    <property type="molecule type" value="Genomic_DNA"/>
</dbReference>
<dbReference type="SMR" id="P0DJ76"/>
<dbReference type="ArachnoServer" id="AS001843">
    <property type="toxin name" value="kappa-theraphotoxin-Hs1e"/>
</dbReference>
<dbReference type="GO" id="GO:0005615">
    <property type="term" value="C:extracellular space"/>
    <property type="evidence" value="ECO:0007669"/>
    <property type="project" value="TreeGrafter"/>
</dbReference>
<dbReference type="GO" id="GO:0015459">
    <property type="term" value="F:potassium channel regulator activity"/>
    <property type="evidence" value="ECO:0007669"/>
    <property type="project" value="UniProtKB-KW"/>
</dbReference>
<dbReference type="GO" id="GO:0004867">
    <property type="term" value="F:serine-type endopeptidase inhibitor activity"/>
    <property type="evidence" value="ECO:0007669"/>
    <property type="project" value="UniProtKB-KW"/>
</dbReference>
<dbReference type="GO" id="GO:0090729">
    <property type="term" value="F:toxin activity"/>
    <property type="evidence" value="ECO:0007669"/>
    <property type="project" value="UniProtKB-KW"/>
</dbReference>
<dbReference type="GO" id="GO:0044562">
    <property type="term" value="P:envenomation resulting in negative regulation of voltage-gated potassium channel activity in another organism"/>
    <property type="evidence" value="ECO:0007669"/>
    <property type="project" value="UniProtKB-ARBA"/>
</dbReference>
<dbReference type="CDD" id="cd22598">
    <property type="entry name" value="Kunitz_huwentoxin"/>
    <property type="match status" value="1"/>
</dbReference>
<dbReference type="FunFam" id="4.10.410.10:FF:000011">
    <property type="entry name" value="Tissue factor pathway inhibitor"/>
    <property type="match status" value="1"/>
</dbReference>
<dbReference type="Gene3D" id="4.10.410.10">
    <property type="entry name" value="Pancreatic trypsin inhibitor Kunitz domain"/>
    <property type="match status" value="1"/>
</dbReference>
<dbReference type="InterPro" id="IPR002223">
    <property type="entry name" value="Kunitz_BPTI"/>
</dbReference>
<dbReference type="InterPro" id="IPR036880">
    <property type="entry name" value="Kunitz_BPTI_sf"/>
</dbReference>
<dbReference type="InterPro" id="IPR020901">
    <property type="entry name" value="Prtase_inh_Kunz-CS"/>
</dbReference>
<dbReference type="InterPro" id="IPR050098">
    <property type="entry name" value="TFPI/VKTCI-like"/>
</dbReference>
<dbReference type="PANTHER" id="PTHR10083:SF374">
    <property type="entry name" value="BPTI_KUNITZ INHIBITOR DOMAIN-CONTAINING PROTEIN"/>
    <property type="match status" value="1"/>
</dbReference>
<dbReference type="PANTHER" id="PTHR10083">
    <property type="entry name" value="KUNITZ-TYPE PROTEASE INHIBITOR-RELATED"/>
    <property type="match status" value="1"/>
</dbReference>
<dbReference type="Pfam" id="PF00014">
    <property type="entry name" value="Kunitz_BPTI"/>
    <property type="match status" value="1"/>
</dbReference>
<dbReference type="PRINTS" id="PR00759">
    <property type="entry name" value="BASICPTASE"/>
</dbReference>
<dbReference type="SMART" id="SM00131">
    <property type="entry name" value="KU"/>
    <property type="match status" value="1"/>
</dbReference>
<dbReference type="SUPFAM" id="SSF57362">
    <property type="entry name" value="BPTI-like"/>
    <property type="match status" value="1"/>
</dbReference>
<dbReference type="PROSITE" id="PS00280">
    <property type="entry name" value="BPTI_KUNITZ_1"/>
    <property type="match status" value="1"/>
</dbReference>
<dbReference type="PROSITE" id="PS50279">
    <property type="entry name" value="BPTI_KUNITZ_2"/>
    <property type="match status" value="1"/>
</dbReference>
<sequence>MGIARILSAVLFLSVLFVVTFPALLLADHHDGRIDTCRLPSDRGRCKASFERWYFNGRTCAKFIYGGCGGNGNKFPTEKACMKRCAKA</sequence>
<protein>
    <recommendedName>
        <fullName>Kunitz-type kappaPI-theraphotoxin-Hs1e</fullName>
        <shortName>KappaPI-TRTX-Hs1e</shortName>
    </recommendedName>
    <alternativeName>
        <fullName evidence="6">Huwentoxin HW11c4</fullName>
    </alternativeName>
    <alternativeName>
        <fullName evidence="5">Kunitz-type serine protease inhibitor HWTX-XI-IS4</fullName>
    </alternativeName>
</protein>
<feature type="signal peptide" evidence="2">
    <location>
        <begin position="1"/>
        <end position="27"/>
    </location>
</feature>
<feature type="propeptide" id="PRO_0000413826" evidence="1">
    <location>
        <begin position="28"/>
        <end position="33"/>
    </location>
</feature>
<feature type="chain" id="PRO_0000413827" description="Kunitz-type kappaPI-theraphotoxin-Hs1e">
    <location>
        <begin position="34"/>
        <end position="88"/>
    </location>
</feature>
<feature type="domain" description="BPTI/Kunitz inhibitor" evidence="3">
    <location>
        <begin position="37"/>
        <end position="85"/>
    </location>
</feature>
<feature type="site" description="May bind Kv1.x/KCNA" evidence="1">
    <location>
        <position position="39"/>
    </location>
</feature>
<feature type="site" description="Reactive bond for trypsin" evidence="1">
    <location>
        <begin position="47"/>
        <end position="48"/>
    </location>
</feature>
<feature type="disulfide bond" evidence="3">
    <location>
        <begin position="37"/>
        <end position="85"/>
    </location>
</feature>
<feature type="disulfide bond" evidence="3">
    <location>
        <begin position="46"/>
        <end position="68"/>
    </location>
</feature>
<feature type="disulfide bond" evidence="3">
    <location>
        <begin position="60"/>
        <end position="81"/>
    </location>
</feature>
<organism>
    <name type="scientific">Cyriopagopus schmidti</name>
    <name type="common">Chinese bird spider</name>
    <name type="synonym">Haplopelma schmidti</name>
    <dbReference type="NCBI Taxonomy" id="29017"/>
    <lineage>
        <taxon>Eukaryota</taxon>
        <taxon>Metazoa</taxon>
        <taxon>Ecdysozoa</taxon>
        <taxon>Arthropoda</taxon>
        <taxon>Chelicerata</taxon>
        <taxon>Arachnida</taxon>
        <taxon>Araneae</taxon>
        <taxon>Mygalomorphae</taxon>
        <taxon>Theraphosidae</taxon>
        <taxon>Cyriopagopus</taxon>
    </lineage>
</organism>